<sequence length="484" mass="55745">MKGLLLRIIAAFALVLWAIDMVFPWQQMMRSEENRYNAIQQRGKLVVGTVNNPVSYFIGNEGQAGLEYELSRAFADYLGVELEMKAMDNGEQLFDALEDNEIDIAAANLLYQAKKAETFQLGPAYYSASWQLVYRKGESRPQSLSQIKDKLIIARGSELPLILQGYQTKYPNLKWQLENNQTQEELLLQVAQGKIKYTVANSIDVSAVQQVRPEIAVAFDVTDEASVHWYLPNNSYNELQAALLDFMNTALEGGLIARIEEKYFNHFSQFDYVDMRQYVQAINDILPKYAPLFDRYKGDLDWRLLAAIAYQESHWNENATSPTGVRGMMMLTKDTAERMKIADRTDAEQSIKAGSEYLHWLISQVPDSIPKEDRIWFALTGYNMGLGHMLDARRLTKNLGGDPDNWLDVKKNLPLLAEKRYYPNLKYGYARGYEAFQYVENIRRYMNSIINYYRVQENADNKDKPSETDENLPLPLTDNQEKQE</sequence>
<keyword id="KW-0998">Cell outer membrane</keyword>
<keyword id="KW-0961">Cell wall biogenesis/degradation</keyword>
<keyword id="KW-0456">Lyase</keyword>
<keyword id="KW-0472">Membrane</keyword>
<keyword id="KW-0732">Signal</keyword>
<protein>
    <recommendedName>
        <fullName evidence="1">Membrane-bound lytic murein transglycosylase F</fullName>
        <ecNumber evidence="1">4.2.2.n1</ecNumber>
    </recommendedName>
    <alternativeName>
        <fullName evidence="1">Murein lyase F</fullName>
    </alternativeName>
</protein>
<comment type="function">
    <text evidence="1">Murein-degrading enzyme that degrades murein glycan strands and insoluble, high-molecular weight murein sacculi, with the concomitant formation of a 1,6-anhydromuramoyl product. Lytic transglycosylases (LTs) play an integral role in the metabolism of the peptidoglycan (PG) sacculus. Their lytic action creates space within the PG sacculus to allow for its expansion as well as for the insertion of various structures such as secretion systems and flagella.</text>
</comment>
<comment type="catalytic activity">
    <reaction evidence="1">
        <text>Exolytic cleavage of the (1-&gt;4)-beta-glycosidic linkage between N-acetylmuramic acid (MurNAc) and N-acetylglucosamine (GlcNAc) residues in peptidoglycan, from either the reducing or the non-reducing ends of the peptidoglycan chains, with concomitant formation of a 1,6-anhydrobond in the MurNAc residue.</text>
        <dbReference type="EC" id="4.2.2.n1"/>
    </reaction>
</comment>
<comment type="subcellular location">
    <subcellularLocation>
        <location>Cell outer membrane</location>
        <topology>Peripheral membrane protein</topology>
    </subcellularLocation>
    <text evidence="1">Attached to the inner leaflet of the outer membrane.</text>
</comment>
<comment type="domain">
    <text evidence="1">The N-terminal domain does not have lytic activity and probably modulates enzymatic activity. The C-terminal domain is the catalytic active domain.</text>
</comment>
<comment type="similarity">
    <text evidence="1">In the N-terminal section; belongs to the bacterial solute-binding protein 3 family.</text>
</comment>
<comment type="similarity">
    <text evidence="1">In the C-terminal section; belongs to the transglycosylase Slt family.</text>
</comment>
<comment type="sequence caution" evidence="3">
    <conflict type="erroneous initiation">
        <sequence resource="EMBL-CDS" id="AAU38415"/>
    </conflict>
</comment>
<evidence type="ECO:0000255" key="1">
    <source>
        <dbReference type="HAMAP-Rule" id="MF_02016"/>
    </source>
</evidence>
<evidence type="ECO:0000256" key="2">
    <source>
        <dbReference type="SAM" id="MobiDB-lite"/>
    </source>
</evidence>
<evidence type="ECO:0000305" key="3"/>
<feature type="signal peptide" evidence="1">
    <location>
        <begin position="1"/>
        <end position="18"/>
    </location>
</feature>
<feature type="chain" id="PRO_0000353949" description="Membrane-bound lytic murein transglycosylase F">
    <location>
        <begin position="19"/>
        <end position="484"/>
    </location>
</feature>
<feature type="region of interest" description="Non-LT domain" evidence="1">
    <location>
        <begin position="19"/>
        <end position="267"/>
    </location>
</feature>
<feature type="region of interest" description="LT domain" evidence="1">
    <location>
        <begin position="268"/>
        <end position="484"/>
    </location>
</feature>
<feature type="region of interest" description="Disordered" evidence="2">
    <location>
        <begin position="459"/>
        <end position="484"/>
    </location>
</feature>
<feature type="active site" evidence="1">
    <location>
        <position position="312"/>
    </location>
</feature>
<reference key="1">
    <citation type="journal article" date="2004" name="Nat. Biotechnol.">
        <title>The genome sequence of the capnophilic rumen bacterium Mannheimia succiniciproducens.</title>
        <authorList>
            <person name="Hong S.H."/>
            <person name="Kim J.S."/>
            <person name="Lee S.Y."/>
            <person name="In Y.H."/>
            <person name="Choi S.S."/>
            <person name="Rih J.-K."/>
            <person name="Kim C.H."/>
            <person name="Jeong H."/>
            <person name="Hur C.G."/>
            <person name="Kim J.J."/>
        </authorList>
    </citation>
    <scope>NUCLEOTIDE SEQUENCE [LARGE SCALE GENOMIC DNA]</scope>
    <source>
        <strain>KCTC 0769BP / MBEL55E</strain>
    </source>
</reference>
<proteinExistence type="inferred from homology"/>
<gene>
    <name evidence="1" type="primary">mltF</name>
    <name type="ordered locus">MS1808</name>
</gene>
<dbReference type="EC" id="4.2.2.n1" evidence="1"/>
<dbReference type="EMBL" id="AE016827">
    <property type="protein sequence ID" value="AAU38415.1"/>
    <property type="status" value="ALT_INIT"/>
    <property type="molecule type" value="Genomic_DNA"/>
</dbReference>
<dbReference type="RefSeq" id="WP_041639973.1">
    <property type="nucleotide sequence ID" value="NC_006300.1"/>
</dbReference>
<dbReference type="SMR" id="Q65RJ5"/>
<dbReference type="STRING" id="221988.MS1808"/>
<dbReference type="CAZy" id="GH23">
    <property type="family name" value="Glycoside Hydrolase Family 23"/>
</dbReference>
<dbReference type="KEGG" id="msu:MS1808"/>
<dbReference type="eggNOG" id="COG4623">
    <property type="taxonomic scope" value="Bacteria"/>
</dbReference>
<dbReference type="HOGENOM" id="CLU_027494_0_1_6"/>
<dbReference type="OrthoDB" id="9815002at2"/>
<dbReference type="Proteomes" id="UP000000607">
    <property type="component" value="Chromosome"/>
</dbReference>
<dbReference type="GO" id="GO:0009279">
    <property type="term" value="C:cell outer membrane"/>
    <property type="evidence" value="ECO:0007669"/>
    <property type="project" value="UniProtKB-SubCell"/>
</dbReference>
<dbReference type="GO" id="GO:0008933">
    <property type="term" value="F:peptidoglycan lytic transglycosylase activity"/>
    <property type="evidence" value="ECO:0007669"/>
    <property type="project" value="UniProtKB-UniRule"/>
</dbReference>
<dbReference type="GO" id="GO:0016998">
    <property type="term" value="P:cell wall macromolecule catabolic process"/>
    <property type="evidence" value="ECO:0007669"/>
    <property type="project" value="UniProtKB-UniRule"/>
</dbReference>
<dbReference type="GO" id="GO:0071555">
    <property type="term" value="P:cell wall organization"/>
    <property type="evidence" value="ECO:0007669"/>
    <property type="project" value="UniProtKB-KW"/>
</dbReference>
<dbReference type="GO" id="GO:0009253">
    <property type="term" value="P:peptidoglycan catabolic process"/>
    <property type="evidence" value="ECO:0007669"/>
    <property type="project" value="TreeGrafter"/>
</dbReference>
<dbReference type="CDD" id="cd13403">
    <property type="entry name" value="MLTF-like"/>
    <property type="match status" value="1"/>
</dbReference>
<dbReference type="CDD" id="cd01009">
    <property type="entry name" value="PBP2_YfhD_N"/>
    <property type="match status" value="1"/>
</dbReference>
<dbReference type="Gene3D" id="1.10.530.10">
    <property type="match status" value="1"/>
</dbReference>
<dbReference type="Gene3D" id="3.40.190.10">
    <property type="entry name" value="Periplasmic binding protein-like II"/>
    <property type="match status" value="2"/>
</dbReference>
<dbReference type="HAMAP" id="MF_02016">
    <property type="entry name" value="MltF"/>
    <property type="match status" value="1"/>
</dbReference>
<dbReference type="InterPro" id="IPR023346">
    <property type="entry name" value="Lysozyme-like_dom_sf"/>
</dbReference>
<dbReference type="InterPro" id="IPR023703">
    <property type="entry name" value="MltF"/>
</dbReference>
<dbReference type="InterPro" id="IPR001638">
    <property type="entry name" value="Solute-binding_3/MltF_N"/>
</dbReference>
<dbReference type="InterPro" id="IPR008258">
    <property type="entry name" value="Transglycosylase_SLT_dom_1"/>
</dbReference>
<dbReference type="NCBIfam" id="NF008112">
    <property type="entry name" value="PRK10859.1"/>
    <property type="match status" value="1"/>
</dbReference>
<dbReference type="PANTHER" id="PTHR35936">
    <property type="entry name" value="MEMBRANE-BOUND LYTIC MUREIN TRANSGLYCOSYLASE F"/>
    <property type="match status" value="1"/>
</dbReference>
<dbReference type="PANTHER" id="PTHR35936:SF32">
    <property type="entry name" value="MEMBRANE-BOUND LYTIC MUREIN TRANSGLYCOSYLASE F"/>
    <property type="match status" value="1"/>
</dbReference>
<dbReference type="Pfam" id="PF00497">
    <property type="entry name" value="SBP_bac_3"/>
    <property type="match status" value="1"/>
</dbReference>
<dbReference type="Pfam" id="PF01464">
    <property type="entry name" value="SLT"/>
    <property type="match status" value="1"/>
</dbReference>
<dbReference type="SMART" id="SM00062">
    <property type="entry name" value="PBPb"/>
    <property type="match status" value="1"/>
</dbReference>
<dbReference type="SUPFAM" id="SSF53955">
    <property type="entry name" value="Lysozyme-like"/>
    <property type="match status" value="1"/>
</dbReference>
<dbReference type="SUPFAM" id="SSF53850">
    <property type="entry name" value="Periplasmic binding protein-like II"/>
    <property type="match status" value="1"/>
</dbReference>
<name>MLTF_MANSM</name>
<accession>Q65RJ5</accession>
<organism>
    <name type="scientific">Mannheimia succiniciproducens (strain KCTC 0769BP / MBEL55E)</name>
    <dbReference type="NCBI Taxonomy" id="221988"/>
    <lineage>
        <taxon>Bacteria</taxon>
        <taxon>Pseudomonadati</taxon>
        <taxon>Pseudomonadota</taxon>
        <taxon>Gammaproteobacteria</taxon>
        <taxon>Pasteurellales</taxon>
        <taxon>Pasteurellaceae</taxon>
        <taxon>Basfia</taxon>
    </lineage>
</organism>